<organism>
    <name type="scientific">Acidianus two-tailed virus</name>
    <name type="common">ATV</name>
    <dbReference type="NCBI Taxonomy" id="315953"/>
    <lineage>
        <taxon>Viruses</taxon>
        <taxon>Viruses incertae sedis</taxon>
        <taxon>Bicaudaviridae</taxon>
        <taxon>Bicaudavirus</taxon>
    </lineage>
</organism>
<accession>Q3V4U1</accession>
<protein>
    <recommendedName>
        <fullName>Uncharacterized protein ORF362</fullName>
    </recommendedName>
</protein>
<dbReference type="EMBL" id="AJ888457">
    <property type="protein sequence ID" value="CAI59873.1"/>
    <property type="molecule type" value="Genomic_DNA"/>
</dbReference>
<dbReference type="RefSeq" id="YP_319895.1">
    <property type="nucleotide sequence ID" value="NC_007409.1"/>
</dbReference>
<dbReference type="GeneID" id="4484275"/>
<dbReference type="KEGG" id="vg:4484275"/>
<dbReference type="Proteomes" id="UP000002150">
    <property type="component" value="Genome"/>
</dbReference>
<name>Y362_ATV</name>
<feature type="chain" id="PRO_0000389049" description="Uncharacterized protein ORF362">
    <location>
        <begin position="1"/>
        <end position="362"/>
    </location>
</feature>
<feature type="region of interest" description="Disordered" evidence="1">
    <location>
        <begin position="314"/>
        <end position="362"/>
    </location>
</feature>
<feature type="compositionally biased region" description="Basic and acidic residues" evidence="1">
    <location>
        <begin position="314"/>
        <end position="323"/>
    </location>
</feature>
<feature type="compositionally biased region" description="Acidic residues" evidence="1">
    <location>
        <begin position="345"/>
        <end position="356"/>
    </location>
</feature>
<sequence length="362" mass="41996">MAMQPWEYVYKLLMPEKAPTDWQKTFTKNIYLALAVPLTKEFEEKIEKGDIKDLKLPVYPVAFDVRFDRNAWVRETDILDILTRSGLYDNDYDFVTPINYNPRSLRYLDFDNSIPGYFPLADLELHFKRDITANPEDYGLKPIDGYKWELDRDGSYKVTSGSLFNVREAKNSGRYSVLFLDDNPRKFNMLNGFGIVRFYISLWEAPEEVRAKAKEECESAGGIYQYDYPVAYCVLPLNKKEANIKASDFILQLNEMVKSKITSEDFLKHVMVYQLPDDMVHQFPGSEQIPVKPVIGKTFQEMVKVAAKDLILGGEEKEPKQESQEQLFNPFTIDEMLTEEQQQQQEEENNATEEEGDTVKLG</sequence>
<evidence type="ECO:0000256" key="1">
    <source>
        <dbReference type="SAM" id="MobiDB-lite"/>
    </source>
</evidence>
<keyword id="KW-1185">Reference proteome</keyword>
<organismHost>
    <name type="scientific">Acidianus convivator</name>
    <dbReference type="NCBI Taxonomy" id="269667"/>
</organismHost>
<proteinExistence type="predicted"/>
<reference key="1">
    <citation type="journal article" date="2005" name="Nature">
        <title>Virology: independent virus development outside a host.</title>
        <authorList>
            <person name="Haring M."/>
            <person name="Vestergaard G."/>
            <person name="Rachel R."/>
            <person name="Chen L."/>
            <person name="Garrett R.A."/>
            <person name="Prangishvili D."/>
        </authorList>
    </citation>
    <scope>NUCLEOTIDE SEQUENCE [GENOMIC DNA]</scope>
</reference>